<proteinExistence type="inferred from homology"/>
<reference key="1">
    <citation type="journal article" date="2004" name="Nucleic Acids Res.">
        <title>Unique features revealed by the genome sequence of Acinetobacter sp. ADP1, a versatile and naturally transformation competent bacterium.</title>
        <authorList>
            <person name="Barbe V."/>
            <person name="Vallenet D."/>
            <person name="Fonknechten N."/>
            <person name="Kreimeyer A."/>
            <person name="Oztas S."/>
            <person name="Labarre L."/>
            <person name="Cruveiller S."/>
            <person name="Robert C."/>
            <person name="Duprat S."/>
            <person name="Wincker P."/>
            <person name="Ornston L.N."/>
            <person name="Weissenbach J."/>
            <person name="Marliere P."/>
            <person name="Cohen G.N."/>
            <person name="Medigue C."/>
        </authorList>
    </citation>
    <scope>NUCLEOTIDE SEQUENCE [LARGE SCALE GENOMIC DNA]</scope>
    <source>
        <strain>ATCC 33305 / BD413 / ADP1</strain>
    </source>
</reference>
<comment type="function">
    <text evidence="1">Key enzyme in the regulation of glycerol uptake and metabolism. Catalyzes the phosphorylation of glycerol to yield sn-glycerol 3-phosphate.</text>
</comment>
<comment type="catalytic activity">
    <reaction evidence="1">
        <text>glycerol + ATP = sn-glycerol 3-phosphate + ADP + H(+)</text>
        <dbReference type="Rhea" id="RHEA:21644"/>
        <dbReference type="ChEBI" id="CHEBI:15378"/>
        <dbReference type="ChEBI" id="CHEBI:17754"/>
        <dbReference type="ChEBI" id="CHEBI:30616"/>
        <dbReference type="ChEBI" id="CHEBI:57597"/>
        <dbReference type="ChEBI" id="CHEBI:456216"/>
        <dbReference type="EC" id="2.7.1.30"/>
    </reaction>
</comment>
<comment type="activity regulation">
    <text evidence="1">Inhibited by fructose 1,6-bisphosphate (FBP).</text>
</comment>
<comment type="pathway">
    <text evidence="1">Polyol metabolism; glycerol degradation via glycerol kinase pathway; sn-glycerol 3-phosphate from glycerol: step 1/1.</text>
</comment>
<comment type="similarity">
    <text evidence="1">Belongs to the FGGY kinase family.</text>
</comment>
<name>GLPK_ACIAD</name>
<organism>
    <name type="scientific">Acinetobacter baylyi (strain ATCC 33305 / BD413 / ADP1)</name>
    <dbReference type="NCBI Taxonomy" id="62977"/>
    <lineage>
        <taxon>Bacteria</taxon>
        <taxon>Pseudomonadati</taxon>
        <taxon>Pseudomonadota</taxon>
        <taxon>Gammaproteobacteria</taxon>
        <taxon>Moraxellales</taxon>
        <taxon>Moraxellaceae</taxon>
        <taxon>Acinetobacter</taxon>
    </lineage>
</organism>
<sequence length="495" mass="54271">MSYLLALDQGTTSSRAIIFDEKGQIHATAQRETRIKTPNSGWVEQDANEIWSSQIAVIQQALASAHILAKDIKALGLTNQRETTVVWDKRTGKALAPAIIWQDRRAAQWCNTLIENGMLVQVQQKTGLRIDPYFSAGKLVWLLENIAGFRILAEQGHAAFGTIDSWLVWNLTQGAEHIIEASNASRTMLMNLSTQMWDEDLLNKFNIPAAILPKIISSDAYVADTAQGLLGSTIPITGILGDQQAALFGQSCFEVGSAKNTYGTGCFMLFNTGDQLQFSQNQLLTTLAWQCQNQTRYALEGSVFMAGAIVQWLRDGLGLIQHSAQVEQLASQVQSTEGVVLVPAFTGLGAPHWDSEARALLCGMSRGTTKAHIARAALEAIAFQVSDVLCAMQSDLSRPLKELRVDGGASQNDMLMQFQADILNVPVLRPKMLESTAWGAAAMAGLKAGVFTNLDEIAASWQLDRTFEPKMKNDERESRLCEWSQALKRAKSNLI</sequence>
<protein>
    <recommendedName>
        <fullName evidence="1">Glycerol kinase</fullName>
        <ecNumber evidence="1">2.7.1.30</ecNumber>
    </recommendedName>
    <alternativeName>
        <fullName evidence="1">ATP:glycerol 3-phosphotransferase</fullName>
    </alternativeName>
    <alternativeName>
        <fullName evidence="1">Glycerokinase</fullName>
        <shortName evidence="1">GK</shortName>
    </alternativeName>
</protein>
<feature type="chain" id="PRO_1000118541" description="Glycerol kinase">
    <location>
        <begin position="1"/>
        <end position="495"/>
    </location>
</feature>
<feature type="binding site" evidence="1">
    <location>
        <position position="11"/>
    </location>
    <ligand>
        <name>ADP</name>
        <dbReference type="ChEBI" id="CHEBI:456216"/>
    </ligand>
</feature>
<feature type="binding site" evidence="1">
    <location>
        <position position="11"/>
    </location>
    <ligand>
        <name>ATP</name>
        <dbReference type="ChEBI" id="CHEBI:30616"/>
    </ligand>
</feature>
<feature type="binding site" evidence="1">
    <location>
        <position position="11"/>
    </location>
    <ligand>
        <name>sn-glycerol 3-phosphate</name>
        <dbReference type="ChEBI" id="CHEBI:57597"/>
    </ligand>
</feature>
<feature type="binding site" evidence="1">
    <location>
        <position position="12"/>
    </location>
    <ligand>
        <name>ATP</name>
        <dbReference type="ChEBI" id="CHEBI:30616"/>
    </ligand>
</feature>
<feature type="binding site" evidence="1">
    <location>
        <position position="13"/>
    </location>
    <ligand>
        <name>ATP</name>
        <dbReference type="ChEBI" id="CHEBI:30616"/>
    </ligand>
</feature>
<feature type="binding site" evidence="1">
    <location>
        <position position="15"/>
    </location>
    <ligand>
        <name>ADP</name>
        <dbReference type="ChEBI" id="CHEBI:456216"/>
    </ligand>
</feature>
<feature type="binding site" evidence="1">
    <location>
        <position position="81"/>
    </location>
    <ligand>
        <name>glycerol</name>
        <dbReference type="ChEBI" id="CHEBI:17754"/>
    </ligand>
</feature>
<feature type="binding site" evidence="1">
    <location>
        <position position="81"/>
    </location>
    <ligand>
        <name>sn-glycerol 3-phosphate</name>
        <dbReference type="ChEBI" id="CHEBI:57597"/>
    </ligand>
</feature>
<feature type="binding site" evidence="1">
    <location>
        <position position="82"/>
    </location>
    <ligand>
        <name>glycerol</name>
        <dbReference type="ChEBI" id="CHEBI:17754"/>
    </ligand>
</feature>
<feature type="binding site" evidence="1">
    <location>
        <position position="82"/>
    </location>
    <ligand>
        <name>sn-glycerol 3-phosphate</name>
        <dbReference type="ChEBI" id="CHEBI:57597"/>
    </ligand>
</feature>
<feature type="binding site" evidence="1">
    <location>
        <position position="133"/>
    </location>
    <ligand>
        <name>glycerol</name>
        <dbReference type="ChEBI" id="CHEBI:17754"/>
    </ligand>
</feature>
<feature type="binding site" evidence="1">
    <location>
        <position position="133"/>
    </location>
    <ligand>
        <name>sn-glycerol 3-phosphate</name>
        <dbReference type="ChEBI" id="CHEBI:57597"/>
    </ligand>
</feature>
<feature type="binding site" evidence="1">
    <location>
        <position position="242"/>
    </location>
    <ligand>
        <name>glycerol</name>
        <dbReference type="ChEBI" id="CHEBI:17754"/>
    </ligand>
</feature>
<feature type="binding site" evidence="1">
    <location>
        <position position="242"/>
    </location>
    <ligand>
        <name>sn-glycerol 3-phosphate</name>
        <dbReference type="ChEBI" id="CHEBI:57597"/>
    </ligand>
</feature>
<feature type="binding site" evidence="1">
    <location>
        <position position="243"/>
    </location>
    <ligand>
        <name>glycerol</name>
        <dbReference type="ChEBI" id="CHEBI:17754"/>
    </ligand>
</feature>
<feature type="binding site" evidence="1">
    <location>
        <position position="264"/>
    </location>
    <ligand>
        <name>ADP</name>
        <dbReference type="ChEBI" id="CHEBI:456216"/>
    </ligand>
</feature>
<feature type="binding site" evidence="1">
    <location>
        <position position="264"/>
    </location>
    <ligand>
        <name>ATP</name>
        <dbReference type="ChEBI" id="CHEBI:30616"/>
    </ligand>
</feature>
<feature type="binding site" evidence="1">
    <location>
        <position position="307"/>
    </location>
    <ligand>
        <name>ADP</name>
        <dbReference type="ChEBI" id="CHEBI:456216"/>
    </ligand>
</feature>
<feature type="binding site" evidence="1">
    <location>
        <position position="307"/>
    </location>
    <ligand>
        <name>ATP</name>
        <dbReference type="ChEBI" id="CHEBI:30616"/>
    </ligand>
</feature>
<feature type="binding site" evidence="1">
    <location>
        <position position="311"/>
    </location>
    <ligand>
        <name>ATP</name>
        <dbReference type="ChEBI" id="CHEBI:30616"/>
    </ligand>
</feature>
<feature type="binding site" evidence="1">
    <location>
        <position position="408"/>
    </location>
    <ligand>
        <name>ADP</name>
        <dbReference type="ChEBI" id="CHEBI:456216"/>
    </ligand>
</feature>
<feature type="binding site" evidence="1">
    <location>
        <position position="408"/>
    </location>
    <ligand>
        <name>ATP</name>
        <dbReference type="ChEBI" id="CHEBI:30616"/>
    </ligand>
</feature>
<feature type="binding site" evidence="1">
    <location>
        <position position="412"/>
    </location>
    <ligand>
        <name>ADP</name>
        <dbReference type="ChEBI" id="CHEBI:456216"/>
    </ligand>
</feature>
<accession>Q6FDN3</accession>
<evidence type="ECO:0000255" key="1">
    <source>
        <dbReference type="HAMAP-Rule" id="MF_00186"/>
    </source>
</evidence>
<gene>
    <name evidence="1" type="primary">glpK</name>
    <name type="ordered locus">ACIAD0930</name>
</gene>
<keyword id="KW-0067">ATP-binding</keyword>
<keyword id="KW-0319">Glycerol metabolism</keyword>
<keyword id="KW-0418">Kinase</keyword>
<keyword id="KW-0547">Nucleotide-binding</keyword>
<keyword id="KW-0808">Transferase</keyword>
<dbReference type="EC" id="2.7.1.30" evidence="1"/>
<dbReference type="EMBL" id="CR543861">
    <property type="protein sequence ID" value="CAG67825.1"/>
    <property type="molecule type" value="Genomic_DNA"/>
</dbReference>
<dbReference type="RefSeq" id="WP_004921999.1">
    <property type="nucleotide sequence ID" value="NC_005966.1"/>
</dbReference>
<dbReference type="SMR" id="Q6FDN3"/>
<dbReference type="STRING" id="202950.GCA_001485005_02674"/>
<dbReference type="GeneID" id="45233386"/>
<dbReference type="KEGG" id="aci:ACIAD0930"/>
<dbReference type="eggNOG" id="COG0554">
    <property type="taxonomic scope" value="Bacteria"/>
</dbReference>
<dbReference type="HOGENOM" id="CLU_009281_2_3_6"/>
<dbReference type="OrthoDB" id="9805576at2"/>
<dbReference type="BioCyc" id="ASP62977:ACIAD_RS04290-MONOMER"/>
<dbReference type="UniPathway" id="UPA00618">
    <property type="reaction ID" value="UER00672"/>
</dbReference>
<dbReference type="Proteomes" id="UP000000430">
    <property type="component" value="Chromosome"/>
</dbReference>
<dbReference type="GO" id="GO:0005829">
    <property type="term" value="C:cytosol"/>
    <property type="evidence" value="ECO:0007669"/>
    <property type="project" value="TreeGrafter"/>
</dbReference>
<dbReference type="GO" id="GO:0005524">
    <property type="term" value="F:ATP binding"/>
    <property type="evidence" value="ECO:0007669"/>
    <property type="project" value="UniProtKB-UniRule"/>
</dbReference>
<dbReference type="GO" id="GO:0004370">
    <property type="term" value="F:glycerol kinase activity"/>
    <property type="evidence" value="ECO:0000250"/>
    <property type="project" value="UniProtKB"/>
</dbReference>
<dbReference type="GO" id="GO:0019563">
    <property type="term" value="P:glycerol catabolic process"/>
    <property type="evidence" value="ECO:0007669"/>
    <property type="project" value="UniProtKB-UniRule"/>
</dbReference>
<dbReference type="GO" id="GO:0006071">
    <property type="term" value="P:glycerol metabolic process"/>
    <property type="evidence" value="ECO:0000250"/>
    <property type="project" value="UniProtKB"/>
</dbReference>
<dbReference type="GO" id="GO:0006072">
    <property type="term" value="P:glycerol-3-phosphate metabolic process"/>
    <property type="evidence" value="ECO:0007669"/>
    <property type="project" value="InterPro"/>
</dbReference>
<dbReference type="CDD" id="cd07786">
    <property type="entry name" value="FGGY_EcGK_like"/>
    <property type="match status" value="1"/>
</dbReference>
<dbReference type="FunFam" id="3.30.420.40:FF:000007">
    <property type="entry name" value="Glycerol kinase"/>
    <property type="match status" value="1"/>
</dbReference>
<dbReference type="FunFam" id="3.30.420.40:FF:000008">
    <property type="entry name" value="Glycerol kinase"/>
    <property type="match status" value="1"/>
</dbReference>
<dbReference type="Gene3D" id="3.30.420.40">
    <property type="match status" value="2"/>
</dbReference>
<dbReference type="HAMAP" id="MF_00186">
    <property type="entry name" value="Glycerol_kin"/>
    <property type="match status" value="1"/>
</dbReference>
<dbReference type="InterPro" id="IPR043129">
    <property type="entry name" value="ATPase_NBD"/>
</dbReference>
<dbReference type="InterPro" id="IPR000577">
    <property type="entry name" value="Carb_kinase_FGGY"/>
</dbReference>
<dbReference type="InterPro" id="IPR018483">
    <property type="entry name" value="Carb_kinase_FGGY_CS"/>
</dbReference>
<dbReference type="InterPro" id="IPR018485">
    <property type="entry name" value="FGGY_C"/>
</dbReference>
<dbReference type="InterPro" id="IPR018484">
    <property type="entry name" value="FGGY_N"/>
</dbReference>
<dbReference type="InterPro" id="IPR005999">
    <property type="entry name" value="Glycerol_kin"/>
</dbReference>
<dbReference type="NCBIfam" id="TIGR01311">
    <property type="entry name" value="glycerol_kin"/>
    <property type="match status" value="1"/>
</dbReference>
<dbReference type="NCBIfam" id="NF000756">
    <property type="entry name" value="PRK00047.1"/>
    <property type="match status" value="1"/>
</dbReference>
<dbReference type="PANTHER" id="PTHR10196:SF69">
    <property type="entry name" value="GLYCEROL KINASE"/>
    <property type="match status" value="1"/>
</dbReference>
<dbReference type="PANTHER" id="PTHR10196">
    <property type="entry name" value="SUGAR KINASE"/>
    <property type="match status" value="1"/>
</dbReference>
<dbReference type="Pfam" id="PF02782">
    <property type="entry name" value="FGGY_C"/>
    <property type="match status" value="1"/>
</dbReference>
<dbReference type="Pfam" id="PF00370">
    <property type="entry name" value="FGGY_N"/>
    <property type="match status" value="1"/>
</dbReference>
<dbReference type="PIRSF" id="PIRSF000538">
    <property type="entry name" value="GlpK"/>
    <property type="match status" value="1"/>
</dbReference>
<dbReference type="SUPFAM" id="SSF53067">
    <property type="entry name" value="Actin-like ATPase domain"/>
    <property type="match status" value="2"/>
</dbReference>
<dbReference type="PROSITE" id="PS00933">
    <property type="entry name" value="FGGY_KINASES_1"/>
    <property type="match status" value="1"/>
</dbReference>
<dbReference type="PROSITE" id="PS00445">
    <property type="entry name" value="FGGY_KINASES_2"/>
    <property type="match status" value="1"/>
</dbReference>